<organism>
    <name type="scientific">Rhizobium etli (strain ATCC 51251 / DSM 11541 / JCM 21823 / NBRC 15573 / CFN 42)</name>
    <dbReference type="NCBI Taxonomy" id="347834"/>
    <lineage>
        <taxon>Bacteria</taxon>
        <taxon>Pseudomonadati</taxon>
        <taxon>Pseudomonadota</taxon>
        <taxon>Alphaproteobacteria</taxon>
        <taxon>Hyphomicrobiales</taxon>
        <taxon>Rhizobiaceae</taxon>
        <taxon>Rhizobium/Agrobacterium group</taxon>
        <taxon>Rhizobium</taxon>
    </lineage>
</organism>
<name>RS12_RHIEC</name>
<evidence type="ECO:0000250" key="1"/>
<evidence type="ECO:0000255" key="2">
    <source>
        <dbReference type="HAMAP-Rule" id="MF_00403"/>
    </source>
</evidence>
<evidence type="ECO:0000305" key="3"/>
<proteinExistence type="inferred from homology"/>
<gene>
    <name evidence="2" type="primary">rpsL</name>
    <name type="ordered locus">RHE_CH01670</name>
</gene>
<reference key="1">
    <citation type="journal article" date="2006" name="Proc. Natl. Acad. Sci. U.S.A.">
        <title>The partitioned Rhizobium etli genome: genetic and metabolic redundancy in seven interacting replicons.</title>
        <authorList>
            <person name="Gonzalez V."/>
            <person name="Santamaria R.I."/>
            <person name="Bustos P."/>
            <person name="Hernandez-Gonzalez I."/>
            <person name="Medrano-Soto A."/>
            <person name="Moreno-Hagelsieb G."/>
            <person name="Janga S.C."/>
            <person name="Ramirez M.A."/>
            <person name="Jimenez-Jacinto V."/>
            <person name="Collado-Vides J."/>
            <person name="Davila G."/>
        </authorList>
    </citation>
    <scope>NUCLEOTIDE SEQUENCE [LARGE SCALE GENOMIC DNA]</scope>
    <source>
        <strain>ATCC 51251 / DSM 11541 / JCM 21823 / NBRC 15573 / CFN 42</strain>
    </source>
</reference>
<keyword id="KW-0488">Methylation</keyword>
<keyword id="KW-1185">Reference proteome</keyword>
<keyword id="KW-0687">Ribonucleoprotein</keyword>
<keyword id="KW-0689">Ribosomal protein</keyword>
<keyword id="KW-0694">RNA-binding</keyword>
<keyword id="KW-0699">rRNA-binding</keyword>
<keyword id="KW-0820">tRNA-binding</keyword>
<sequence length="123" mass="14015">MPTVNQLIRKPRQANVKRNKVPALQENPQKRGVCTRVYTTTPRKPNSALRKVAKIRLTNGFEVIGYIPGEGHNLQEHSVVMIRGGRVKDLPGVRYHIIRGVLDTQGVKNRKQRRSKYGAKRPK</sequence>
<dbReference type="EMBL" id="CP000133">
    <property type="protein sequence ID" value="ABC90465.1"/>
    <property type="molecule type" value="Genomic_DNA"/>
</dbReference>
<dbReference type="RefSeq" id="WP_011424978.1">
    <property type="nucleotide sequence ID" value="NC_007761.1"/>
</dbReference>
<dbReference type="SMR" id="Q2K9M1"/>
<dbReference type="KEGG" id="ret:RHE_CH01670"/>
<dbReference type="eggNOG" id="COG0048">
    <property type="taxonomic scope" value="Bacteria"/>
</dbReference>
<dbReference type="HOGENOM" id="CLU_104295_1_2_5"/>
<dbReference type="OrthoDB" id="9802366at2"/>
<dbReference type="Proteomes" id="UP000001936">
    <property type="component" value="Chromosome"/>
</dbReference>
<dbReference type="GO" id="GO:0015935">
    <property type="term" value="C:small ribosomal subunit"/>
    <property type="evidence" value="ECO:0007669"/>
    <property type="project" value="InterPro"/>
</dbReference>
<dbReference type="GO" id="GO:0019843">
    <property type="term" value="F:rRNA binding"/>
    <property type="evidence" value="ECO:0007669"/>
    <property type="project" value="UniProtKB-UniRule"/>
</dbReference>
<dbReference type="GO" id="GO:0003735">
    <property type="term" value="F:structural constituent of ribosome"/>
    <property type="evidence" value="ECO:0007669"/>
    <property type="project" value="InterPro"/>
</dbReference>
<dbReference type="GO" id="GO:0000049">
    <property type="term" value="F:tRNA binding"/>
    <property type="evidence" value="ECO:0007669"/>
    <property type="project" value="UniProtKB-UniRule"/>
</dbReference>
<dbReference type="GO" id="GO:0006412">
    <property type="term" value="P:translation"/>
    <property type="evidence" value="ECO:0007669"/>
    <property type="project" value="UniProtKB-UniRule"/>
</dbReference>
<dbReference type="CDD" id="cd03368">
    <property type="entry name" value="Ribosomal_S12"/>
    <property type="match status" value="1"/>
</dbReference>
<dbReference type="FunFam" id="2.40.50.140:FF:000001">
    <property type="entry name" value="30S ribosomal protein S12"/>
    <property type="match status" value="1"/>
</dbReference>
<dbReference type="Gene3D" id="2.40.50.140">
    <property type="entry name" value="Nucleic acid-binding proteins"/>
    <property type="match status" value="1"/>
</dbReference>
<dbReference type="HAMAP" id="MF_00403_B">
    <property type="entry name" value="Ribosomal_uS12_B"/>
    <property type="match status" value="1"/>
</dbReference>
<dbReference type="InterPro" id="IPR012340">
    <property type="entry name" value="NA-bd_OB-fold"/>
</dbReference>
<dbReference type="InterPro" id="IPR006032">
    <property type="entry name" value="Ribosomal_uS12"/>
</dbReference>
<dbReference type="InterPro" id="IPR005679">
    <property type="entry name" value="Ribosomal_uS12_bac"/>
</dbReference>
<dbReference type="NCBIfam" id="TIGR00981">
    <property type="entry name" value="rpsL_bact"/>
    <property type="match status" value="1"/>
</dbReference>
<dbReference type="PANTHER" id="PTHR11652">
    <property type="entry name" value="30S RIBOSOMAL PROTEIN S12 FAMILY MEMBER"/>
    <property type="match status" value="1"/>
</dbReference>
<dbReference type="Pfam" id="PF00164">
    <property type="entry name" value="Ribosom_S12_S23"/>
    <property type="match status" value="1"/>
</dbReference>
<dbReference type="PIRSF" id="PIRSF002133">
    <property type="entry name" value="Ribosomal_S12/S23"/>
    <property type="match status" value="1"/>
</dbReference>
<dbReference type="PRINTS" id="PR01034">
    <property type="entry name" value="RIBOSOMALS12"/>
</dbReference>
<dbReference type="SUPFAM" id="SSF50249">
    <property type="entry name" value="Nucleic acid-binding proteins"/>
    <property type="match status" value="1"/>
</dbReference>
<dbReference type="PROSITE" id="PS00055">
    <property type="entry name" value="RIBOSOMAL_S12"/>
    <property type="match status" value="1"/>
</dbReference>
<comment type="function">
    <text evidence="2">With S4 and S5 plays an important role in translational accuracy.</text>
</comment>
<comment type="function">
    <text evidence="2">Interacts with and stabilizes bases of the 16S rRNA that are involved in tRNA selection in the A site and with the mRNA backbone. Located at the interface of the 30S and 50S subunits, it traverses the body of the 30S subunit contacting proteins on the other side and probably holding the rRNA structure together. The combined cluster of proteins S8, S12 and S17 appears to hold together the shoulder and platform of the 30S subunit.</text>
</comment>
<comment type="subunit">
    <text evidence="2">Part of the 30S ribosomal subunit. Contacts proteins S8 and S17. May interact with IF1 in the 30S initiation complex.</text>
</comment>
<comment type="similarity">
    <text evidence="2">Belongs to the universal ribosomal protein uS12 family.</text>
</comment>
<accession>Q2K9M1</accession>
<feature type="chain" id="PRO_0000263578" description="Small ribosomal subunit protein uS12">
    <location>
        <begin position="1"/>
        <end position="123"/>
    </location>
</feature>
<feature type="modified residue" description="3-methylthioaspartic acid" evidence="1">
    <location>
        <position position="89"/>
    </location>
</feature>
<protein>
    <recommendedName>
        <fullName evidence="2">Small ribosomal subunit protein uS12</fullName>
    </recommendedName>
    <alternativeName>
        <fullName evidence="3">30S ribosomal protein S12</fullName>
    </alternativeName>
</protein>